<sequence length="1017" mass="114266">MADNVLRKLIVEICSARNLMPKDGQGTASAYAIVDFDGQRRRTKTKFRDLNPQWDEKLEFFVHDVATMGEEILEINLCNDKKTGKRSTFLGKVKIAGSAFASAGSETLVYYPLEKRSVFSQIKGEIGLKAYYVDENPPAAPAATEPKPEAAAATEEKPPEIAKAEDGKKETEAAKTEEKKEGDKKEEEKPKEEAKPDEKKPDAPPDTKAKKPDTAVAPPPPPAEVKNPPIPQKAETVKQNELGIKPENVNRQDLIGSDLELPSLTRDQNRGGGYDLVDRMPFLYIRVAKAKRAKNDGSNPVYAKLVIGTNGVKTRSQTGKDWDQVFAFEKESLNSTSLEVSVWSEEKIEKEDKTTTTTESCLGTVSFDLQEVPKRVPPDSPLAPQWYTLESEKSPGNDVMLAVWLGTQADEAFQEAWQSDSGGLIPETRSKVYLSPKLWYLRLTVIQTQDLQLGLGSEAKSKIPTTELYVKAQLGPQVFKTARTSIGPSASSSGSGNPTWNEDLVFVASEPFEPFLIVTVEDITNGQSIGQTKIHMGSVERRNDDRTEPKSRWFNLAGDEKKPYSGRIHVKVCLEGGYHVLDEAAHVTSDVRPSAKQLAKPPIGLLEVGIRGATNLLPVKTRDGTRGTTDAYVVAKYGPKWIRTRTILDRFNPRWNEQYTWDVYDPCTVLTIGVFDNGRYKRDESGKQGRDVRVGKIRVRLSTLDMNRIYLNSYTLTVILPSGAKKMGEVEIAVRFSCPSWLSIIQAYVTPMLPRMHYVRPLGPAQQDILRHTAMRIVTARLARSEPPLGQEVVQYMLDTDNHVWSMRRSKANWFRVITFLSRAATIARWIHGIRTWVHPPTTVLVHLLLVAIVLCPHLVLPTVFMYAFLILALRFRYRGRVKVNSVDPRLSCVDSVAPDELDEEFDGFPTTRQPEVVRIRYDRLRALAGRAQTLLGDVAAQGERVEALFNWRDPRATCIFVVFCLFASFLFYIVPFKVFLLGSGFYYIRHPRFRDDMPSVPVNFFRRLPSMSDQIL</sequence>
<accession>Q9SS68</accession>
<reference key="1">
    <citation type="journal article" date="2000" name="Nature">
        <title>Sequence and analysis of chromosome 3 of the plant Arabidopsis thaliana.</title>
        <authorList>
            <person name="Salanoubat M."/>
            <person name="Lemcke K."/>
            <person name="Rieger M."/>
            <person name="Ansorge W."/>
            <person name="Unseld M."/>
            <person name="Fartmann B."/>
            <person name="Valle G."/>
            <person name="Bloecker H."/>
            <person name="Perez-Alonso M."/>
            <person name="Obermaier B."/>
            <person name="Delseny M."/>
            <person name="Boutry M."/>
            <person name="Grivell L.A."/>
            <person name="Mache R."/>
            <person name="Puigdomenech P."/>
            <person name="De Simone V."/>
            <person name="Choisne N."/>
            <person name="Artiguenave F."/>
            <person name="Robert C."/>
            <person name="Brottier P."/>
            <person name="Wincker P."/>
            <person name="Cattolico L."/>
            <person name="Weissenbach J."/>
            <person name="Saurin W."/>
            <person name="Quetier F."/>
            <person name="Schaefer M."/>
            <person name="Mueller-Auer S."/>
            <person name="Gabel C."/>
            <person name="Fuchs M."/>
            <person name="Benes V."/>
            <person name="Wurmbach E."/>
            <person name="Drzonek H."/>
            <person name="Erfle H."/>
            <person name="Jordan N."/>
            <person name="Bangert S."/>
            <person name="Wiedelmann R."/>
            <person name="Kranz H."/>
            <person name="Voss H."/>
            <person name="Holland R."/>
            <person name="Brandt P."/>
            <person name="Nyakatura G."/>
            <person name="Vezzi A."/>
            <person name="D'Angelo M."/>
            <person name="Pallavicini A."/>
            <person name="Toppo S."/>
            <person name="Simionati B."/>
            <person name="Conrad A."/>
            <person name="Hornischer K."/>
            <person name="Kauer G."/>
            <person name="Loehnert T.-H."/>
            <person name="Nordsiek G."/>
            <person name="Reichelt J."/>
            <person name="Scharfe M."/>
            <person name="Schoen O."/>
            <person name="Bargues M."/>
            <person name="Terol J."/>
            <person name="Climent J."/>
            <person name="Navarro P."/>
            <person name="Collado C."/>
            <person name="Perez-Perez A."/>
            <person name="Ottenwaelder B."/>
            <person name="Duchemin D."/>
            <person name="Cooke R."/>
            <person name="Laudie M."/>
            <person name="Berger-Llauro C."/>
            <person name="Purnelle B."/>
            <person name="Masuy D."/>
            <person name="de Haan M."/>
            <person name="Maarse A.C."/>
            <person name="Alcaraz J.-P."/>
            <person name="Cottet A."/>
            <person name="Casacuberta E."/>
            <person name="Monfort A."/>
            <person name="Argiriou A."/>
            <person name="Flores M."/>
            <person name="Liguori R."/>
            <person name="Vitale D."/>
            <person name="Mannhaupt G."/>
            <person name="Haase D."/>
            <person name="Schoof H."/>
            <person name="Rudd S."/>
            <person name="Zaccaria P."/>
            <person name="Mewes H.-W."/>
            <person name="Mayer K.F.X."/>
            <person name="Kaul S."/>
            <person name="Town C.D."/>
            <person name="Koo H.L."/>
            <person name="Tallon L.J."/>
            <person name="Jenkins J."/>
            <person name="Rooney T."/>
            <person name="Rizzo M."/>
            <person name="Walts A."/>
            <person name="Utterback T."/>
            <person name="Fujii C.Y."/>
            <person name="Shea T.P."/>
            <person name="Creasy T.H."/>
            <person name="Haas B."/>
            <person name="Maiti R."/>
            <person name="Wu D."/>
            <person name="Peterson J."/>
            <person name="Van Aken S."/>
            <person name="Pai G."/>
            <person name="Militscher J."/>
            <person name="Sellers P."/>
            <person name="Gill J.E."/>
            <person name="Feldblyum T.V."/>
            <person name="Preuss D."/>
            <person name="Lin X."/>
            <person name="Nierman W.C."/>
            <person name="Salzberg S.L."/>
            <person name="White O."/>
            <person name="Venter J.C."/>
            <person name="Fraser C.M."/>
            <person name="Kaneko T."/>
            <person name="Nakamura Y."/>
            <person name="Sato S."/>
            <person name="Kato T."/>
            <person name="Asamizu E."/>
            <person name="Sasamoto S."/>
            <person name="Kimura T."/>
            <person name="Idesawa K."/>
            <person name="Kawashima K."/>
            <person name="Kishida Y."/>
            <person name="Kiyokawa C."/>
            <person name="Kohara M."/>
            <person name="Matsumoto M."/>
            <person name="Matsuno A."/>
            <person name="Muraki A."/>
            <person name="Nakayama S."/>
            <person name="Nakazaki N."/>
            <person name="Shinpo S."/>
            <person name="Takeuchi C."/>
            <person name="Wada T."/>
            <person name="Watanabe A."/>
            <person name="Yamada M."/>
            <person name="Yasuda M."/>
            <person name="Tabata S."/>
        </authorList>
    </citation>
    <scope>NUCLEOTIDE SEQUENCE [LARGE SCALE GENOMIC DNA]</scope>
    <source>
        <strain>cv. Columbia</strain>
    </source>
</reference>
<reference key="2">
    <citation type="journal article" date="2017" name="Plant J.">
        <title>Araport11: a complete reannotation of the Arabidopsis thaliana reference genome.</title>
        <authorList>
            <person name="Cheng C.Y."/>
            <person name="Krishnakumar V."/>
            <person name="Chan A.P."/>
            <person name="Thibaud-Nissen F."/>
            <person name="Schobel S."/>
            <person name="Town C.D."/>
        </authorList>
    </citation>
    <scope>GENOME REANNOTATION</scope>
    <source>
        <strain>cv. Columbia</strain>
    </source>
</reference>
<reference key="3">
    <citation type="journal article" date="2018" name="Plant Physiol.">
        <title>Characterization of multiple C2 domain and transmembrane region proteins in Arabidopsis.</title>
        <authorList>
            <person name="Liu L."/>
            <person name="Li C."/>
            <person name="Liang Z."/>
            <person name="Yu H."/>
        </authorList>
    </citation>
    <scope>TISSUE SPECIFICITY</scope>
    <scope>DEVELOPMENTAL STAGE</scope>
    <scope>SUBCELLULAR LOCATION</scope>
    <scope>GENE FAMILY</scope>
    <scope>NOMENCLATURE</scope>
    <source>
        <strain>cv. Columbia</strain>
    </source>
</reference>
<evidence type="ECO:0000255" key="1"/>
<evidence type="ECO:0000255" key="2">
    <source>
        <dbReference type="PROSITE-ProRule" id="PRU00041"/>
    </source>
</evidence>
<evidence type="ECO:0000256" key="3">
    <source>
        <dbReference type="SAM" id="MobiDB-lite"/>
    </source>
</evidence>
<evidence type="ECO:0000269" key="4">
    <source>
    </source>
</evidence>
<evidence type="ECO:0000303" key="5">
    <source>
    </source>
</evidence>
<evidence type="ECO:0000305" key="6"/>
<evidence type="ECO:0000312" key="7">
    <source>
        <dbReference type="Araport" id="AT3G03680"/>
    </source>
</evidence>
<evidence type="ECO:0000312" key="8">
    <source>
        <dbReference type="EMBL" id="AAF03465.1"/>
    </source>
</evidence>
<proteinExistence type="evidence at transcript level"/>
<comment type="function">
    <text evidence="5">May function as a signaling molecule by regulating the trafficking of other regulators.</text>
</comment>
<comment type="cofactor">
    <cofactor evidence="2">
        <name>Ca(2+)</name>
        <dbReference type="ChEBI" id="CHEBI:29108"/>
    </cofactor>
</comment>
<comment type="subcellular location">
    <subcellularLocation>
        <location evidence="1">Membrane</location>
        <topology evidence="1">Multi-pass membrane protein</topology>
    </subcellularLocation>
    <subcellularLocation>
        <location evidence="4">Vesicle</location>
    </subcellularLocation>
    <subcellularLocation>
        <location evidence="4">Golgi apparatus membrane</location>
        <topology evidence="1">Multi-pass membrane protein</topology>
    </subcellularLocation>
    <text evidence="4">Localized in small structures within cells.</text>
</comment>
<comment type="tissue specificity">
    <text evidence="4">Expressed in incipient leaf primordia and in roots meristems (PubMed:29259105). Observed in flowers (PubMed:29259105).</text>
</comment>
<comment type="developmental stage">
    <text evidence="4">In developing flowers, only observed in stamens of young flowers, but disappears in old flowers.</text>
</comment>
<comment type="similarity">
    <text evidence="6">Belongs to the MCTP family.</text>
</comment>
<feature type="chain" id="PRO_0000457908" description="Multiple C2 domain and transmembrane region protein 14">
    <location>
        <begin position="1"/>
        <end position="1017"/>
    </location>
</feature>
<feature type="transmembrane region" description="Helical" evidence="1">
    <location>
        <begin position="851"/>
        <end position="871"/>
    </location>
</feature>
<feature type="transmembrane region" description="Helical" evidence="1">
    <location>
        <begin position="957"/>
        <end position="977"/>
    </location>
</feature>
<feature type="domain" description="C2 1" evidence="2">
    <location>
        <begin position="1"/>
        <end position="110"/>
    </location>
</feature>
<feature type="domain" description="C2 2" evidence="2">
    <location>
        <begin position="258"/>
        <end position="387"/>
    </location>
</feature>
<feature type="domain" description="C2 3" evidence="2">
    <location>
        <begin position="420"/>
        <end position="554"/>
    </location>
</feature>
<feature type="domain" description="C2 4" evidence="2">
    <location>
        <begin position="587"/>
        <end position="714"/>
    </location>
</feature>
<feature type="region of interest" description="Disordered" evidence="3">
    <location>
        <begin position="139"/>
        <end position="231"/>
    </location>
</feature>
<feature type="compositionally biased region" description="Low complexity" evidence="3">
    <location>
        <begin position="141"/>
        <end position="153"/>
    </location>
</feature>
<feature type="compositionally biased region" description="Basic and acidic residues" evidence="3">
    <location>
        <begin position="154"/>
        <end position="213"/>
    </location>
</feature>
<feature type="compositionally biased region" description="Pro residues" evidence="3">
    <location>
        <begin position="217"/>
        <end position="231"/>
    </location>
</feature>
<feature type="binding site" evidence="2">
    <location>
        <position position="296"/>
    </location>
    <ligand>
        <name>Ca(2+)</name>
        <dbReference type="ChEBI" id="CHEBI:29108"/>
        <label>1</label>
    </ligand>
</feature>
<feature type="binding site" evidence="2">
    <location>
        <position position="296"/>
    </location>
    <ligand>
        <name>Ca(2+)</name>
        <dbReference type="ChEBI" id="CHEBI:29108"/>
        <label>2</label>
    </ligand>
</feature>
<feature type="binding site" evidence="2">
    <location>
        <position position="299"/>
    </location>
    <ligand>
        <name>Ca(2+)</name>
        <dbReference type="ChEBI" id="CHEBI:29108"/>
        <label>1</label>
    </ligand>
</feature>
<feature type="binding site" evidence="2">
    <location>
        <position position="352"/>
    </location>
    <ligand>
        <name>Ca(2+)</name>
        <dbReference type="ChEBI" id="CHEBI:29108"/>
        <label>1</label>
    </ligand>
</feature>
<feature type="binding site" evidence="2">
    <location>
        <position position="352"/>
    </location>
    <ligand>
        <name>Ca(2+)</name>
        <dbReference type="ChEBI" id="CHEBI:29108"/>
        <label>2</label>
    </ligand>
</feature>
<feature type="binding site" evidence="2">
    <location>
        <position position="355"/>
    </location>
    <ligand>
        <name>Ca(2+)</name>
        <dbReference type="ChEBI" id="CHEBI:29108"/>
        <label>1</label>
    </ligand>
</feature>
<feature type="binding site" evidence="2">
    <location>
        <position position="355"/>
    </location>
    <ligand>
        <name>Ca(2+)</name>
        <dbReference type="ChEBI" id="CHEBI:29108"/>
        <label>2</label>
    </ligand>
</feature>
<feature type="binding site" evidence="2">
    <location>
        <position position="359"/>
    </location>
    <ligand>
        <name>Ca(2+)</name>
        <dbReference type="ChEBI" id="CHEBI:29108"/>
        <label>2</label>
    </ligand>
</feature>
<name>MCT14_ARATH</name>
<keyword id="KW-0106">Calcium</keyword>
<keyword id="KW-0333">Golgi apparatus</keyword>
<keyword id="KW-0472">Membrane</keyword>
<keyword id="KW-0479">Metal-binding</keyword>
<keyword id="KW-1185">Reference proteome</keyword>
<keyword id="KW-0677">Repeat</keyword>
<keyword id="KW-0812">Transmembrane</keyword>
<keyword id="KW-1133">Transmembrane helix</keyword>
<protein>
    <recommendedName>
        <fullName evidence="5">Multiple C2 domain and transmembrane region protein 14</fullName>
    </recommendedName>
</protein>
<dbReference type="EMBL" id="AC009327">
    <property type="protein sequence ID" value="AAF03465.1"/>
    <property type="molecule type" value="Genomic_DNA"/>
</dbReference>
<dbReference type="EMBL" id="CP002686">
    <property type="protein sequence ID" value="AEE73971.1"/>
    <property type="molecule type" value="Genomic_DNA"/>
</dbReference>
<dbReference type="RefSeq" id="NP_187018.1">
    <property type="nucleotide sequence ID" value="NM_111239.3"/>
</dbReference>
<dbReference type="SMR" id="Q9SS68"/>
<dbReference type="FunCoup" id="Q9SS68">
    <property type="interactions" value="318"/>
</dbReference>
<dbReference type="STRING" id="3702.Q9SS68"/>
<dbReference type="iPTMnet" id="Q9SS68"/>
<dbReference type="PaxDb" id="3702-AT3G03680.1"/>
<dbReference type="ProteomicsDB" id="189383"/>
<dbReference type="EnsemblPlants" id="AT3G03680.1">
    <property type="protein sequence ID" value="AT3G03680.1"/>
    <property type="gene ID" value="AT3G03680"/>
</dbReference>
<dbReference type="GeneID" id="821190"/>
<dbReference type="Gramene" id="AT3G03680.1">
    <property type="protein sequence ID" value="AT3G03680.1"/>
    <property type="gene ID" value="AT3G03680"/>
</dbReference>
<dbReference type="KEGG" id="ath:AT3G03680"/>
<dbReference type="Araport" id="AT3G03680"/>
<dbReference type="TAIR" id="AT3G03680">
    <property type="gene designation" value="MCTP14"/>
</dbReference>
<dbReference type="eggNOG" id="ENOG502QR9H">
    <property type="taxonomic scope" value="Eukaryota"/>
</dbReference>
<dbReference type="HOGENOM" id="CLU_003762_1_0_1"/>
<dbReference type="InParanoid" id="Q9SS68"/>
<dbReference type="OMA" id="IRTWAHP"/>
<dbReference type="PRO" id="PR:Q9SS68"/>
<dbReference type="Proteomes" id="UP000006548">
    <property type="component" value="Chromosome 3"/>
</dbReference>
<dbReference type="ExpressionAtlas" id="Q9SS68">
    <property type="expression patterns" value="baseline and differential"/>
</dbReference>
<dbReference type="GO" id="GO:0000139">
    <property type="term" value="C:Golgi membrane"/>
    <property type="evidence" value="ECO:0007669"/>
    <property type="project" value="UniProtKB-SubCell"/>
</dbReference>
<dbReference type="GO" id="GO:0031982">
    <property type="term" value="C:vesicle"/>
    <property type="evidence" value="ECO:0000314"/>
    <property type="project" value="TAIR"/>
</dbReference>
<dbReference type="GO" id="GO:0046872">
    <property type="term" value="F:metal ion binding"/>
    <property type="evidence" value="ECO:0007669"/>
    <property type="project" value="UniProtKB-KW"/>
</dbReference>
<dbReference type="CDD" id="cd08378">
    <property type="entry name" value="C2B_MCTP_PRT_plant"/>
    <property type="match status" value="1"/>
</dbReference>
<dbReference type="CDD" id="cd04019">
    <property type="entry name" value="C2C_MCTP_PRT_plant"/>
    <property type="match status" value="1"/>
</dbReference>
<dbReference type="CDD" id="cd08379">
    <property type="entry name" value="C2D_MCTP_PRT_plant"/>
    <property type="match status" value="1"/>
</dbReference>
<dbReference type="FunFam" id="2.60.40.150:FF:000090">
    <property type="entry name" value="C2 domain-containing protein"/>
    <property type="match status" value="1"/>
</dbReference>
<dbReference type="FunFam" id="2.60.40.150:FF:000300">
    <property type="entry name" value="C2 domain-containing protein"/>
    <property type="match status" value="1"/>
</dbReference>
<dbReference type="FunFam" id="2.60.40.150:FF:000304">
    <property type="entry name" value="C2 domain-containing protein"/>
    <property type="match status" value="1"/>
</dbReference>
<dbReference type="Gene3D" id="2.60.40.150">
    <property type="entry name" value="C2 domain"/>
    <property type="match status" value="4"/>
</dbReference>
<dbReference type="InterPro" id="IPR000008">
    <property type="entry name" value="C2_dom"/>
</dbReference>
<dbReference type="InterPro" id="IPR035892">
    <property type="entry name" value="C2_domain_sf"/>
</dbReference>
<dbReference type="InterPro" id="IPR047257">
    <property type="entry name" value="C2B_MCTP_PRT_plant"/>
</dbReference>
<dbReference type="InterPro" id="IPR047258">
    <property type="entry name" value="C2C_MCTP_PRT_plant"/>
</dbReference>
<dbReference type="InterPro" id="IPR047255">
    <property type="entry name" value="C2D_MCTP_PRT_plant"/>
</dbReference>
<dbReference type="InterPro" id="IPR013583">
    <property type="entry name" value="MCTP_C"/>
</dbReference>
<dbReference type="InterPro" id="IPR047259">
    <property type="entry name" value="QUIRKY-like"/>
</dbReference>
<dbReference type="PANTHER" id="PTHR31425:SF43">
    <property type="entry name" value="MULTIPLE C2 DOMAIN AND TRANSMEMBRANE REGION PROTEIN 14"/>
    <property type="match status" value="1"/>
</dbReference>
<dbReference type="PANTHER" id="PTHR31425">
    <property type="entry name" value="PHOSPHORIBOSYLANTHRANILATE TRANSFERASE ISOFORM 1"/>
    <property type="match status" value="1"/>
</dbReference>
<dbReference type="Pfam" id="PF00168">
    <property type="entry name" value="C2"/>
    <property type="match status" value="4"/>
</dbReference>
<dbReference type="Pfam" id="PF08372">
    <property type="entry name" value="PRT_C"/>
    <property type="match status" value="1"/>
</dbReference>
<dbReference type="SMART" id="SM00239">
    <property type="entry name" value="C2"/>
    <property type="match status" value="4"/>
</dbReference>
<dbReference type="SUPFAM" id="SSF49562">
    <property type="entry name" value="C2 domain (Calcium/lipid-binding domain, CaLB)"/>
    <property type="match status" value="4"/>
</dbReference>
<dbReference type="PROSITE" id="PS50004">
    <property type="entry name" value="C2"/>
    <property type="match status" value="3"/>
</dbReference>
<gene>
    <name evidence="5" type="primary">MCTP14</name>
    <name evidence="7" type="ordered locus">At3g03680</name>
    <name evidence="8" type="ORF">T12J13.4</name>
</gene>
<organism>
    <name type="scientific">Arabidopsis thaliana</name>
    <name type="common">Mouse-ear cress</name>
    <dbReference type="NCBI Taxonomy" id="3702"/>
    <lineage>
        <taxon>Eukaryota</taxon>
        <taxon>Viridiplantae</taxon>
        <taxon>Streptophyta</taxon>
        <taxon>Embryophyta</taxon>
        <taxon>Tracheophyta</taxon>
        <taxon>Spermatophyta</taxon>
        <taxon>Magnoliopsida</taxon>
        <taxon>eudicotyledons</taxon>
        <taxon>Gunneridae</taxon>
        <taxon>Pentapetalae</taxon>
        <taxon>rosids</taxon>
        <taxon>malvids</taxon>
        <taxon>Brassicales</taxon>
        <taxon>Brassicaceae</taxon>
        <taxon>Camelineae</taxon>
        <taxon>Arabidopsis</taxon>
    </lineage>
</organism>